<organism>
    <name type="scientific">Brucella abortus (strain S19)</name>
    <dbReference type="NCBI Taxonomy" id="430066"/>
    <lineage>
        <taxon>Bacteria</taxon>
        <taxon>Pseudomonadati</taxon>
        <taxon>Pseudomonadota</taxon>
        <taxon>Alphaproteobacteria</taxon>
        <taxon>Hyphomicrobiales</taxon>
        <taxon>Brucellaceae</taxon>
        <taxon>Brucella/Ochrobactrum group</taxon>
        <taxon>Brucella</taxon>
    </lineage>
</organism>
<reference key="1">
    <citation type="journal article" date="2008" name="PLoS ONE">
        <title>Genome sequence of Brucella abortus vaccine strain S19 compared to virulent strains yields candidate virulence genes.</title>
        <authorList>
            <person name="Crasta O.R."/>
            <person name="Folkerts O."/>
            <person name="Fei Z."/>
            <person name="Mane S.P."/>
            <person name="Evans C."/>
            <person name="Martino-Catt S."/>
            <person name="Bricker B."/>
            <person name="Yu G."/>
            <person name="Du L."/>
            <person name="Sobral B.W."/>
        </authorList>
    </citation>
    <scope>NUCLEOTIDE SEQUENCE [LARGE SCALE GENOMIC DNA]</scope>
    <source>
        <strain>S19</strain>
    </source>
</reference>
<proteinExistence type="inferred from homology"/>
<keyword id="KW-0678">Repressor</keyword>
<keyword id="KW-0687">Ribonucleoprotein</keyword>
<keyword id="KW-0689">Ribosomal protein</keyword>
<keyword id="KW-0694">RNA-binding</keyword>
<keyword id="KW-0699">rRNA-binding</keyword>
<keyword id="KW-0810">Translation regulation</keyword>
<keyword id="KW-0820">tRNA-binding</keyword>
<evidence type="ECO:0000255" key="1">
    <source>
        <dbReference type="HAMAP-Rule" id="MF_01318"/>
    </source>
</evidence>
<evidence type="ECO:0000305" key="2"/>
<dbReference type="EMBL" id="CP000887">
    <property type="protein sequence ID" value="ACD72687.1"/>
    <property type="molecule type" value="Genomic_DNA"/>
</dbReference>
<dbReference type="RefSeq" id="WP_002964373.1">
    <property type="nucleotide sequence ID" value="NC_010742.1"/>
</dbReference>
<dbReference type="SMR" id="B2S690"/>
<dbReference type="GeneID" id="97533514"/>
<dbReference type="KEGG" id="bmc:BAbS19_I11820"/>
<dbReference type="HOGENOM" id="CLU_062853_0_0_5"/>
<dbReference type="Proteomes" id="UP000002565">
    <property type="component" value="Chromosome 1"/>
</dbReference>
<dbReference type="GO" id="GO:0022625">
    <property type="term" value="C:cytosolic large ribosomal subunit"/>
    <property type="evidence" value="ECO:0007669"/>
    <property type="project" value="TreeGrafter"/>
</dbReference>
<dbReference type="GO" id="GO:0019843">
    <property type="term" value="F:rRNA binding"/>
    <property type="evidence" value="ECO:0007669"/>
    <property type="project" value="UniProtKB-UniRule"/>
</dbReference>
<dbReference type="GO" id="GO:0003735">
    <property type="term" value="F:structural constituent of ribosome"/>
    <property type="evidence" value="ECO:0007669"/>
    <property type="project" value="InterPro"/>
</dbReference>
<dbReference type="GO" id="GO:0000049">
    <property type="term" value="F:tRNA binding"/>
    <property type="evidence" value="ECO:0007669"/>
    <property type="project" value="UniProtKB-KW"/>
</dbReference>
<dbReference type="GO" id="GO:0006417">
    <property type="term" value="P:regulation of translation"/>
    <property type="evidence" value="ECO:0007669"/>
    <property type="project" value="UniProtKB-KW"/>
</dbReference>
<dbReference type="GO" id="GO:0006412">
    <property type="term" value="P:translation"/>
    <property type="evidence" value="ECO:0007669"/>
    <property type="project" value="UniProtKB-UniRule"/>
</dbReference>
<dbReference type="CDD" id="cd00403">
    <property type="entry name" value="Ribosomal_L1"/>
    <property type="match status" value="1"/>
</dbReference>
<dbReference type="FunFam" id="3.40.50.790:FF:000001">
    <property type="entry name" value="50S ribosomal protein L1"/>
    <property type="match status" value="1"/>
</dbReference>
<dbReference type="Gene3D" id="3.30.190.20">
    <property type="match status" value="1"/>
</dbReference>
<dbReference type="Gene3D" id="3.40.50.790">
    <property type="match status" value="1"/>
</dbReference>
<dbReference type="HAMAP" id="MF_01318_B">
    <property type="entry name" value="Ribosomal_uL1_B"/>
    <property type="match status" value="1"/>
</dbReference>
<dbReference type="InterPro" id="IPR005878">
    <property type="entry name" value="Ribosom_uL1_bac-type"/>
</dbReference>
<dbReference type="InterPro" id="IPR002143">
    <property type="entry name" value="Ribosomal_uL1"/>
</dbReference>
<dbReference type="InterPro" id="IPR023674">
    <property type="entry name" value="Ribosomal_uL1-like"/>
</dbReference>
<dbReference type="InterPro" id="IPR028364">
    <property type="entry name" value="Ribosomal_uL1/biogenesis"/>
</dbReference>
<dbReference type="InterPro" id="IPR016095">
    <property type="entry name" value="Ribosomal_uL1_3-a/b-sand"/>
</dbReference>
<dbReference type="InterPro" id="IPR023673">
    <property type="entry name" value="Ribosomal_uL1_CS"/>
</dbReference>
<dbReference type="NCBIfam" id="TIGR01169">
    <property type="entry name" value="rplA_bact"/>
    <property type="match status" value="1"/>
</dbReference>
<dbReference type="PANTHER" id="PTHR36427">
    <property type="entry name" value="54S RIBOSOMAL PROTEIN L1, MITOCHONDRIAL"/>
    <property type="match status" value="1"/>
</dbReference>
<dbReference type="PANTHER" id="PTHR36427:SF3">
    <property type="entry name" value="LARGE RIBOSOMAL SUBUNIT PROTEIN UL1M"/>
    <property type="match status" value="1"/>
</dbReference>
<dbReference type="Pfam" id="PF00687">
    <property type="entry name" value="Ribosomal_L1"/>
    <property type="match status" value="1"/>
</dbReference>
<dbReference type="PIRSF" id="PIRSF002155">
    <property type="entry name" value="Ribosomal_L1"/>
    <property type="match status" value="1"/>
</dbReference>
<dbReference type="SUPFAM" id="SSF56808">
    <property type="entry name" value="Ribosomal protein L1"/>
    <property type="match status" value="1"/>
</dbReference>
<dbReference type="PROSITE" id="PS01199">
    <property type="entry name" value="RIBOSOMAL_L1"/>
    <property type="match status" value="1"/>
</dbReference>
<accession>B2S690</accession>
<feature type="chain" id="PRO_1000141369" description="Large ribosomal subunit protein uL1">
    <location>
        <begin position="1"/>
        <end position="233"/>
    </location>
</feature>
<gene>
    <name evidence="1" type="primary">rplA</name>
    <name type="ordered locus">BAbS19_I11820</name>
</gene>
<protein>
    <recommendedName>
        <fullName evidence="1">Large ribosomal subunit protein uL1</fullName>
    </recommendedName>
    <alternativeName>
        <fullName evidence="2">50S ribosomal protein L1</fullName>
    </alternativeName>
</protein>
<name>RL1_BRUA1</name>
<sequence>MAKISKRINKIREGVDRNKLYDLSAAIGLVKERAVAKFDETVEIAMNLGVDPRHADQMVRGVVNLPNGTGRTVRVAVFARGDKAEEAKKAGADIVGAEELFEIVNGGKIEFDRCIATPDMMPLVGRLGKVLGPRGMMPNPKVGTVTTDVAAAVAASKGGAVEFRVEKAGIIHAGIGKVSFDNAKLEENIKAFADAVIKAKPSAAKGEYVKRVSISSTMGVGVKVDPSTVKVVD</sequence>
<comment type="function">
    <text evidence="1">Binds directly to 23S rRNA. The L1 stalk is quite mobile in the ribosome, and is involved in E site tRNA release.</text>
</comment>
<comment type="function">
    <text evidence="1">Protein L1 is also a translational repressor protein, it controls the translation of the L11 operon by binding to its mRNA.</text>
</comment>
<comment type="subunit">
    <text evidence="1">Part of the 50S ribosomal subunit.</text>
</comment>
<comment type="similarity">
    <text evidence="1">Belongs to the universal ribosomal protein uL1 family.</text>
</comment>